<comment type="function">
    <text evidence="1">Involved in the gluconeogenesis. Catalyzes the conversion of oxaloacetate (OAA) to phosphoenolpyruvate (PEP) through direct phosphoryl transfer between the nucleoside triphosphate and OAA.</text>
</comment>
<comment type="catalytic activity">
    <reaction evidence="1">
        <text>oxaloacetate + ATP = phosphoenolpyruvate + ADP + CO2</text>
        <dbReference type="Rhea" id="RHEA:18617"/>
        <dbReference type="ChEBI" id="CHEBI:16452"/>
        <dbReference type="ChEBI" id="CHEBI:16526"/>
        <dbReference type="ChEBI" id="CHEBI:30616"/>
        <dbReference type="ChEBI" id="CHEBI:58702"/>
        <dbReference type="ChEBI" id="CHEBI:456216"/>
        <dbReference type="EC" id="4.1.1.49"/>
    </reaction>
</comment>
<comment type="cofactor">
    <cofactor evidence="1">
        <name>Mn(2+)</name>
        <dbReference type="ChEBI" id="CHEBI:29035"/>
    </cofactor>
    <text evidence="1">Binds 1 Mn(2+) ion per subunit.</text>
</comment>
<comment type="pathway">
    <text evidence="1">Carbohydrate biosynthesis; gluconeogenesis.</text>
</comment>
<comment type="subunit">
    <text evidence="1">Monomer.</text>
</comment>
<comment type="subcellular location">
    <subcellularLocation>
        <location evidence="1">Cytoplasm</location>
    </subcellularLocation>
</comment>
<comment type="similarity">
    <text evidence="1">Belongs to the phosphoenolpyruvate carboxykinase (ATP) family.</text>
</comment>
<proteinExistence type="inferred from homology"/>
<organism>
    <name type="scientific">Shewanella sp. (strain W3-18-1)</name>
    <dbReference type="NCBI Taxonomy" id="351745"/>
    <lineage>
        <taxon>Bacteria</taxon>
        <taxon>Pseudomonadati</taxon>
        <taxon>Pseudomonadota</taxon>
        <taxon>Gammaproteobacteria</taxon>
        <taxon>Alteromonadales</taxon>
        <taxon>Shewanellaceae</taxon>
        <taxon>Shewanella</taxon>
    </lineage>
</organism>
<gene>
    <name evidence="1" type="primary">pckA</name>
    <name type="ordered locus">Sputw3181_3708</name>
</gene>
<reference key="1">
    <citation type="submission" date="2006-12" db="EMBL/GenBank/DDBJ databases">
        <title>Complete sequence of Shewanella sp. W3-18-1.</title>
        <authorList>
            <consortium name="US DOE Joint Genome Institute"/>
            <person name="Copeland A."/>
            <person name="Lucas S."/>
            <person name="Lapidus A."/>
            <person name="Barry K."/>
            <person name="Detter J.C."/>
            <person name="Glavina del Rio T."/>
            <person name="Hammon N."/>
            <person name="Israni S."/>
            <person name="Dalin E."/>
            <person name="Tice H."/>
            <person name="Pitluck S."/>
            <person name="Chain P."/>
            <person name="Malfatti S."/>
            <person name="Shin M."/>
            <person name="Vergez L."/>
            <person name="Schmutz J."/>
            <person name="Larimer F."/>
            <person name="Land M."/>
            <person name="Hauser L."/>
            <person name="Kyrpides N."/>
            <person name="Lykidis A."/>
            <person name="Tiedje J."/>
            <person name="Richardson P."/>
        </authorList>
    </citation>
    <scope>NUCLEOTIDE SEQUENCE [LARGE SCALE GENOMIC DNA]</scope>
    <source>
        <strain>W3-18-1</strain>
    </source>
</reference>
<keyword id="KW-0067">ATP-binding</keyword>
<keyword id="KW-0963">Cytoplasm</keyword>
<keyword id="KW-0210">Decarboxylase</keyword>
<keyword id="KW-0312">Gluconeogenesis</keyword>
<keyword id="KW-0456">Lyase</keyword>
<keyword id="KW-0464">Manganese</keyword>
<keyword id="KW-0479">Metal-binding</keyword>
<keyword id="KW-0547">Nucleotide-binding</keyword>
<dbReference type="EC" id="4.1.1.49" evidence="1"/>
<dbReference type="EMBL" id="CP000503">
    <property type="protein sequence ID" value="ABM26517.1"/>
    <property type="molecule type" value="Genomic_DNA"/>
</dbReference>
<dbReference type="SMR" id="A1RPC2"/>
<dbReference type="KEGG" id="shw:Sputw3181_3708"/>
<dbReference type="HOGENOM" id="CLU_018247_0_1_6"/>
<dbReference type="UniPathway" id="UPA00138"/>
<dbReference type="Proteomes" id="UP000002597">
    <property type="component" value="Chromosome"/>
</dbReference>
<dbReference type="GO" id="GO:0005829">
    <property type="term" value="C:cytosol"/>
    <property type="evidence" value="ECO:0007669"/>
    <property type="project" value="TreeGrafter"/>
</dbReference>
<dbReference type="GO" id="GO:0005524">
    <property type="term" value="F:ATP binding"/>
    <property type="evidence" value="ECO:0007669"/>
    <property type="project" value="UniProtKB-UniRule"/>
</dbReference>
<dbReference type="GO" id="GO:0046872">
    <property type="term" value="F:metal ion binding"/>
    <property type="evidence" value="ECO:0007669"/>
    <property type="project" value="UniProtKB-KW"/>
</dbReference>
<dbReference type="GO" id="GO:0004612">
    <property type="term" value="F:phosphoenolpyruvate carboxykinase (ATP) activity"/>
    <property type="evidence" value="ECO:0007669"/>
    <property type="project" value="UniProtKB-UniRule"/>
</dbReference>
<dbReference type="GO" id="GO:0006094">
    <property type="term" value="P:gluconeogenesis"/>
    <property type="evidence" value="ECO:0007669"/>
    <property type="project" value="UniProtKB-UniRule"/>
</dbReference>
<dbReference type="CDD" id="cd00484">
    <property type="entry name" value="PEPCK_ATP"/>
    <property type="match status" value="1"/>
</dbReference>
<dbReference type="FunFam" id="2.170.8.10:FF:000001">
    <property type="entry name" value="Phosphoenolpyruvate carboxykinase (ATP)"/>
    <property type="match status" value="1"/>
</dbReference>
<dbReference type="Gene3D" id="3.90.228.20">
    <property type="match status" value="1"/>
</dbReference>
<dbReference type="Gene3D" id="3.40.449.10">
    <property type="entry name" value="Phosphoenolpyruvate Carboxykinase, domain 1"/>
    <property type="match status" value="1"/>
</dbReference>
<dbReference type="Gene3D" id="2.170.8.10">
    <property type="entry name" value="Phosphoenolpyruvate Carboxykinase, domain 2"/>
    <property type="match status" value="1"/>
</dbReference>
<dbReference type="HAMAP" id="MF_00453">
    <property type="entry name" value="PEPCK_ATP"/>
    <property type="match status" value="1"/>
</dbReference>
<dbReference type="InterPro" id="IPR001272">
    <property type="entry name" value="PEP_carboxykinase_ATP"/>
</dbReference>
<dbReference type="InterPro" id="IPR013035">
    <property type="entry name" value="PEP_carboxykinase_C"/>
</dbReference>
<dbReference type="InterPro" id="IPR008210">
    <property type="entry name" value="PEP_carboxykinase_N"/>
</dbReference>
<dbReference type="InterPro" id="IPR015994">
    <property type="entry name" value="PEPCK_ATP_CS"/>
</dbReference>
<dbReference type="NCBIfam" id="TIGR00224">
    <property type="entry name" value="pckA"/>
    <property type="match status" value="1"/>
</dbReference>
<dbReference type="NCBIfam" id="NF006820">
    <property type="entry name" value="PRK09344.1-2"/>
    <property type="match status" value="1"/>
</dbReference>
<dbReference type="NCBIfam" id="NF006821">
    <property type="entry name" value="PRK09344.1-3"/>
    <property type="match status" value="1"/>
</dbReference>
<dbReference type="NCBIfam" id="NF006823">
    <property type="entry name" value="PRK09344.1-5"/>
    <property type="match status" value="1"/>
</dbReference>
<dbReference type="PANTHER" id="PTHR30031:SF0">
    <property type="entry name" value="PHOSPHOENOLPYRUVATE CARBOXYKINASE (ATP)"/>
    <property type="match status" value="1"/>
</dbReference>
<dbReference type="PANTHER" id="PTHR30031">
    <property type="entry name" value="PHOSPHOENOLPYRUVATE CARBOXYKINASE ATP"/>
    <property type="match status" value="1"/>
</dbReference>
<dbReference type="Pfam" id="PF01293">
    <property type="entry name" value="PEPCK_ATP"/>
    <property type="match status" value="1"/>
</dbReference>
<dbReference type="PIRSF" id="PIRSF006294">
    <property type="entry name" value="PEP_crbxkin"/>
    <property type="match status" value="1"/>
</dbReference>
<dbReference type="SUPFAM" id="SSF68923">
    <property type="entry name" value="PEP carboxykinase N-terminal domain"/>
    <property type="match status" value="1"/>
</dbReference>
<dbReference type="SUPFAM" id="SSF53795">
    <property type="entry name" value="PEP carboxykinase-like"/>
    <property type="match status" value="1"/>
</dbReference>
<dbReference type="PROSITE" id="PS00532">
    <property type="entry name" value="PEPCK_ATP"/>
    <property type="match status" value="1"/>
</dbReference>
<name>PCKA_SHESW</name>
<sequence length="513" mass="55938">MADGLHRVHYNPSTAQLVEFALLRGEGELTANGALVAKTGARSGRSPGDRFIVKEPSSEADIEWGPVNQAFEPGAFEGLWARVEAYLADKELFVSDLEVGADTEHYQPVRVTTQYAWHQLFARNLFIIPEEFNRKDKPVWQIINAPDFVCDPARDGTNSDAAVILNFAERKVLLAGLKYAGEMKKSMFSVQNFLLPAQGVLPMHCSANVGKDGDTTLFFGLSGTGKTTLSADPKRFLIGDDEHGWAPGGVFNIEGGCYAKCIDLSQKNEPVIWDAIRFGTVLENVVMDEHRVPNYKDSSLTENTRAAYPLEHIAQRKEDNCGAEPHAVVFLTCDVSGVLPPVSILTKEQAAYHFLSGYTAKVGSTEIGSTSAIQSTFSTCFGAPFFPRPAGVYAELLMKRIESFGSQVYLVNTGWTGGPHGLGKRFDIPTTRAIVDAIVSGELKDVETIHLDTLNLAVPVAVTGVDSNLLNPINTWGDKALYAEYAQKLAEAFTKNFAKYQVSDAIRHAGPKA</sequence>
<evidence type="ECO:0000255" key="1">
    <source>
        <dbReference type="HAMAP-Rule" id="MF_00453"/>
    </source>
</evidence>
<accession>A1RPC2</accession>
<feature type="chain" id="PRO_1000026359" description="Phosphoenolpyruvate carboxykinase (ATP)">
    <location>
        <begin position="1"/>
        <end position="513"/>
    </location>
</feature>
<feature type="binding site" evidence="1">
    <location>
        <position position="45"/>
    </location>
    <ligand>
        <name>substrate</name>
    </ligand>
</feature>
<feature type="binding site" evidence="1">
    <location>
        <position position="179"/>
    </location>
    <ligand>
        <name>substrate</name>
    </ligand>
</feature>
<feature type="binding site" evidence="1">
    <location>
        <position position="185"/>
    </location>
    <ligand>
        <name>ATP</name>
        <dbReference type="ChEBI" id="CHEBI:30616"/>
    </ligand>
</feature>
<feature type="binding site" evidence="1">
    <location>
        <position position="185"/>
    </location>
    <ligand>
        <name>Mn(2+)</name>
        <dbReference type="ChEBI" id="CHEBI:29035"/>
    </ligand>
</feature>
<feature type="binding site" evidence="1">
    <location>
        <position position="185"/>
    </location>
    <ligand>
        <name>substrate</name>
    </ligand>
</feature>
<feature type="binding site" evidence="1">
    <location>
        <position position="204"/>
    </location>
    <ligand>
        <name>ATP</name>
        <dbReference type="ChEBI" id="CHEBI:30616"/>
    </ligand>
</feature>
<feature type="binding site" evidence="1">
    <location>
        <position position="204"/>
    </location>
    <ligand>
        <name>Mn(2+)</name>
        <dbReference type="ChEBI" id="CHEBI:29035"/>
    </ligand>
</feature>
<feature type="binding site" evidence="1">
    <location>
        <begin position="220"/>
        <end position="228"/>
    </location>
    <ligand>
        <name>ATP</name>
        <dbReference type="ChEBI" id="CHEBI:30616"/>
    </ligand>
</feature>
<feature type="binding site" evidence="1">
    <location>
        <position position="241"/>
    </location>
    <ligand>
        <name>Mn(2+)</name>
        <dbReference type="ChEBI" id="CHEBI:29035"/>
    </ligand>
</feature>
<feature type="binding site" evidence="1">
    <location>
        <position position="269"/>
    </location>
    <ligand>
        <name>ATP</name>
        <dbReference type="ChEBI" id="CHEBI:30616"/>
    </ligand>
</feature>
<feature type="binding site" evidence="1">
    <location>
        <position position="305"/>
    </location>
    <ligand>
        <name>ATP</name>
        <dbReference type="ChEBI" id="CHEBI:30616"/>
    </ligand>
</feature>
<feature type="binding site" evidence="1">
    <location>
        <position position="305"/>
    </location>
    <ligand>
        <name>substrate</name>
    </ligand>
</feature>
<feature type="binding site" evidence="1">
    <location>
        <position position="431"/>
    </location>
    <ligand>
        <name>ATP</name>
        <dbReference type="ChEBI" id="CHEBI:30616"/>
    </ligand>
</feature>
<protein>
    <recommendedName>
        <fullName evidence="1">Phosphoenolpyruvate carboxykinase (ATP)</fullName>
        <shortName evidence="1">PCK</shortName>
        <shortName evidence="1">PEP carboxykinase</shortName>
        <shortName evidence="1">PEPCK</shortName>
        <ecNumber evidence="1">4.1.1.49</ecNumber>
    </recommendedName>
</protein>